<keyword id="KW-0238">DNA-binding</keyword>
<keyword id="KW-0479">Metal-binding</keyword>
<keyword id="KW-0539">Nucleus</keyword>
<keyword id="KW-1185">Reference proteome</keyword>
<keyword id="KW-0677">Repeat</keyword>
<keyword id="KW-0804">Transcription</keyword>
<keyword id="KW-0805">Transcription regulation</keyword>
<keyword id="KW-0862">Zinc</keyword>
<keyword id="KW-0863">Zinc-finger</keyword>
<evidence type="ECO:0000250" key="1"/>
<evidence type="ECO:0000255" key="2">
    <source>
        <dbReference type="PROSITE-ProRule" id="PRU00042"/>
    </source>
</evidence>
<evidence type="ECO:0000255" key="3">
    <source>
        <dbReference type="PROSITE-ProRule" id="PRU00119"/>
    </source>
</evidence>
<evidence type="ECO:0000305" key="4"/>
<protein>
    <recommendedName>
        <fullName>Zinc finger protein 705B</fullName>
    </recommendedName>
</protein>
<accession>P0CI00</accession>
<accession>A8K971</accession>
<accession>A8MY01</accession>
<organism>
    <name type="scientific">Homo sapiens</name>
    <name type="common">Human</name>
    <dbReference type="NCBI Taxonomy" id="9606"/>
    <lineage>
        <taxon>Eukaryota</taxon>
        <taxon>Metazoa</taxon>
        <taxon>Chordata</taxon>
        <taxon>Craniata</taxon>
        <taxon>Vertebrata</taxon>
        <taxon>Euteleostomi</taxon>
        <taxon>Mammalia</taxon>
        <taxon>Eutheria</taxon>
        <taxon>Euarchontoglires</taxon>
        <taxon>Primates</taxon>
        <taxon>Haplorrhini</taxon>
        <taxon>Catarrhini</taxon>
        <taxon>Hominidae</taxon>
        <taxon>Homo</taxon>
    </lineage>
</organism>
<dbReference type="EMBL" id="AK292586">
    <property type="protein sequence ID" value="BAF85275.1"/>
    <property type="molecule type" value="mRNA"/>
</dbReference>
<dbReference type="EMBL" id="AC130365">
    <property type="status" value="NOT_ANNOTATED_CDS"/>
    <property type="molecule type" value="Genomic_DNA"/>
</dbReference>
<dbReference type="CCDS" id="CCDS55194.1"/>
<dbReference type="RefSeq" id="NP_001180559.1">
    <property type="nucleotide sequence ID" value="NM_001193630.1"/>
</dbReference>
<dbReference type="RefSeq" id="XP_047277163.1">
    <property type="nucleotide sequence ID" value="XM_047421207.1"/>
</dbReference>
<dbReference type="RefSeq" id="XP_047277164.1">
    <property type="nucleotide sequence ID" value="XM_047421208.1"/>
</dbReference>
<dbReference type="SMR" id="P0CI00"/>
<dbReference type="BioGRID" id="573352">
    <property type="interactions" value="2"/>
</dbReference>
<dbReference type="STRING" id="9606.ENSP00000382987"/>
<dbReference type="BioMuta" id="ZNF705B"/>
<dbReference type="DMDM" id="308191623"/>
<dbReference type="MassIVE" id="P0CI00"/>
<dbReference type="PaxDb" id="9606-ENSP00000382987"/>
<dbReference type="PeptideAtlas" id="P0CI00"/>
<dbReference type="DNASU" id="100132396"/>
<dbReference type="Ensembl" id="ENST00000400120.3">
    <property type="protein sequence ID" value="ENSP00000382987.3"/>
    <property type="gene ID" value="ENSG00000215356.4"/>
</dbReference>
<dbReference type="GeneID" id="100132396"/>
<dbReference type="KEGG" id="hsa:100132396"/>
<dbReference type="MANE-Select" id="ENST00000400120.3">
    <property type="protein sequence ID" value="ENSP00000382987.3"/>
    <property type="RefSeq nucleotide sequence ID" value="NM_001193630.1"/>
    <property type="RefSeq protein sequence ID" value="NP_001180559.1"/>
</dbReference>
<dbReference type="UCSC" id="uc010lro.1">
    <property type="organism name" value="human"/>
</dbReference>
<dbReference type="AGR" id="HGNC:32284"/>
<dbReference type="CTD" id="100132396"/>
<dbReference type="GeneCards" id="ZNF705B"/>
<dbReference type="HGNC" id="HGNC:32284">
    <property type="gene designation" value="ZNF705B"/>
</dbReference>
<dbReference type="HPA" id="ENSG00000215356">
    <property type="expression patterns" value="Not detected"/>
</dbReference>
<dbReference type="neXtProt" id="NX_P0CI00"/>
<dbReference type="VEuPathDB" id="HostDB:ENSG00000215356"/>
<dbReference type="eggNOG" id="KOG1721">
    <property type="taxonomic scope" value="Eukaryota"/>
</dbReference>
<dbReference type="GeneTree" id="ENSGT00940000163626"/>
<dbReference type="HOGENOM" id="CLU_002678_0_7_1"/>
<dbReference type="InParanoid" id="P0CI00"/>
<dbReference type="OMA" id="KELWWEG"/>
<dbReference type="PAN-GO" id="P0CI00">
    <property type="GO annotations" value="3 GO annotations based on evolutionary models"/>
</dbReference>
<dbReference type="PhylomeDB" id="P0CI00"/>
<dbReference type="PathwayCommons" id="P0CI00"/>
<dbReference type="BioGRID-ORCS" id="100132396">
    <property type="hits" value="13 hits in 1040 CRISPR screens"/>
</dbReference>
<dbReference type="ChiTaRS" id="ZNF705B">
    <property type="organism name" value="human"/>
</dbReference>
<dbReference type="GenomeRNAi" id="100132396"/>
<dbReference type="Pharos" id="P0CI00">
    <property type="development level" value="Tdark"/>
</dbReference>
<dbReference type="Proteomes" id="UP000005640">
    <property type="component" value="Chromosome 8"/>
</dbReference>
<dbReference type="RNAct" id="P0CI00">
    <property type="molecule type" value="protein"/>
</dbReference>
<dbReference type="Bgee" id="ENSG00000215356">
    <property type="expression patterns" value="Expressed in male germ line stem cell (sensu Vertebrata) in testis and 2 other cell types or tissues"/>
</dbReference>
<dbReference type="GO" id="GO:0005634">
    <property type="term" value="C:nucleus"/>
    <property type="evidence" value="ECO:0000318"/>
    <property type="project" value="GO_Central"/>
</dbReference>
<dbReference type="GO" id="GO:0000981">
    <property type="term" value="F:DNA-binding transcription factor activity, RNA polymerase II-specific"/>
    <property type="evidence" value="ECO:0000318"/>
    <property type="project" value="GO_Central"/>
</dbReference>
<dbReference type="GO" id="GO:0000977">
    <property type="term" value="F:RNA polymerase II transcription regulatory region sequence-specific DNA binding"/>
    <property type="evidence" value="ECO:0000318"/>
    <property type="project" value="GO_Central"/>
</dbReference>
<dbReference type="GO" id="GO:0008270">
    <property type="term" value="F:zinc ion binding"/>
    <property type="evidence" value="ECO:0007669"/>
    <property type="project" value="UniProtKB-KW"/>
</dbReference>
<dbReference type="GO" id="GO:0006357">
    <property type="term" value="P:regulation of transcription by RNA polymerase II"/>
    <property type="evidence" value="ECO:0000318"/>
    <property type="project" value="GO_Central"/>
</dbReference>
<dbReference type="CDD" id="cd07765">
    <property type="entry name" value="KRAB_A-box"/>
    <property type="match status" value="1"/>
</dbReference>
<dbReference type="FunFam" id="3.30.160.60:FF:002754">
    <property type="entry name" value="Zinc finger protein 705A"/>
    <property type="match status" value="1"/>
</dbReference>
<dbReference type="FunFam" id="3.30.160.60:FF:002524">
    <property type="entry name" value="Zinc finger protein 705F"/>
    <property type="match status" value="2"/>
</dbReference>
<dbReference type="FunFam" id="3.30.160.60:FF:000787">
    <property type="entry name" value="Zinc finger protein 784"/>
    <property type="match status" value="1"/>
</dbReference>
<dbReference type="Gene3D" id="6.10.140.140">
    <property type="match status" value="1"/>
</dbReference>
<dbReference type="Gene3D" id="3.30.160.60">
    <property type="entry name" value="Classic Zinc Finger"/>
    <property type="match status" value="5"/>
</dbReference>
<dbReference type="InterPro" id="IPR001909">
    <property type="entry name" value="KRAB"/>
</dbReference>
<dbReference type="InterPro" id="IPR036051">
    <property type="entry name" value="KRAB_dom_sf"/>
</dbReference>
<dbReference type="InterPro" id="IPR036236">
    <property type="entry name" value="Znf_C2H2_sf"/>
</dbReference>
<dbReference type="InterPro" id="IPR013087">
    <property type="entry name" value="Znf_C2H2_type"/>
</dbReference>
<dbReference type="PANTHER" id="PTHR24390:SF237">
    <property type="entry name" value="FI23536P1-RELATED"/>
    <property type="match status" value="1"/>
</dbReference>
<dbReference type="PANTHER" id="PTHR24390">
    <property type="entry name" value="ZINC FINGER PROTEIN"/>
    <property type="match status" value="1"/>
</dbReference>
<dbReference type="Pfam" id="PF01352">
    <property type="entry name" value="KRAB"/>
    <property type="match status" value="1"/>
</dbReference>
<dbReference type="Pfam" id="PF00096">
    <property type="entry name" value="zf-C2H2"/>
    <property type="match status" value="3"/>
</dbReference>
<dbReference type="SMART" id="SM00349">
    <property type="entry name" value="KRAB"/>
    <property type="match status" value="1"/>
</dbReference>
<dbReference type="SMART" id="SM00355">
    <property type="entry name" value="ZnF_C2H2"/>
    <property type="match status" value="3"/>
</dbReference>
<dbReference type="SUPFAM" id="SSF57667">
    <property type="entry name" value="beta-beta-alpha zinc fingers"/>
    <property type="match status" value="4"/>
</dbReference>
<dbReference type="SUPFAM" id="SSF109640">
    <property type="entry name" value="KRAB domain (Kruppel-associated box)"/>
    <property type="match status" value="1"/>
</dbReference>
<dbReference type="PROSITE" id="PS50805">
    <property type="entry name" value="KRAB"/>
    <property type="match status" value="1"/>
</dbReference>
<dbReference type="PROSITE" id="PS00028">
    <property type="entry name" value="ZINC_FINGER_C2H2_1"/>
    <property type="match status" value="3"/>
</dbReference>
<dbReference type="PROSITE" id="PS50157">
    <property type="entry name" value="ZINC_FINGER_C2H2_2"/>
    <property type="match status" value="4"/>
</dbReference>
<gene>
    <name type="primary">ZNF705B</name>
</gene>
<reference key="1">
    <citation type="journal article" date="2004" name="Nat. Genet.">
        <title>Complete sequencing and characterization of 21,243 full-length human cDNAs.</title>
        <authorList>
            <person name="Ota T."/>
            <person name="Suzuki Y."/>
            <person name="Nishikawa T."/>
            <person name="Otsuki T."/>
            <person name="Sugiyama T."/>
            <person name="Irie R."/>
            <person name="Wakamatsu A."/>
            <person name="Hayashi K."/>
            <person name="Sato H."/>
            <person name="Nagai K."/>
            <person name="Kimura K."/>
            <person name="Makita H."/>
            <person name="Sekine M."/>
            <person name="Obayashi M."/>
            <person name="Nishi T."/>
            <person name="Shibahara T."/>
            <person name="Tanaka T."/>
            <person name="Ishii S."/>
            <person name="Yamamoto J."/>
            <person name="Saito K."/>
            <person name="Kawai Y."/>
            <person name="Isono Y."/>
            <person name="Nakamura Y."/>
            <person name="Nagahari K."/>
            <person name="Murakami K."/>
            <person name="Yasuda T."/>
            <person name="Iwayanagi T."/>
            <person name="Wagatsuma M."/>
            <person name="Shiratori A."/>
            <person name="Sudo H."/>
            <person name="Hosoiri T."/>
            <person name="Kaku Y."/>
            <person name="Kodaira H."/>
            <person name="Kondo H."/>
            <person name="Sugawara M."/>
            <person name="Takahashi M."/>
            <person name="Kanda K."/>
            <person name="Yokoi T."/>
            <person name="Furuya T."/>
            <person name="Kikkawa E."/>
            <person name="Omura Y."/>
            <person name="Abe K."/>
            <person name="Kamihara K."/>
            <person name="Katsuta N."/>
            <person name="Sato K."/>
            <person name="Tanikawa M."/>
            <person name="Yamazaki M."/>
            <person name="Ninomiya K."/>
            <person name="Ishibashi T."/>
            <person name="Yamashita H."/>
            <person name="Murakawa K."/>
            <person name="Fujimori K."/>
            <person name="Tanai H."/>
            <person name="Kimata M."/>
            <person name="Watanabe M."/>
            <person name="Hiraoka S."/>
            <person name="Chiba Y."/>
            <person name="Ishida S."/>
            <person name="Ono Y."/>
            <person name="Takiguchi S."/>
            <person name="Watanabe S."/>
            <person name="Yosida M."/>
            <person name="Hotuta T."/>
            <person name="Kusano J."/>
            <person name="Kanehori K."/>
            <person name="Takahashi-Fujii A."/>
            <person name="Hara H."/>
            <person name="Tanase T.-O."/>
            <person name="Nomura Y."/>
            <person name="Togiya S."/>
            <person name="Komai F."/>
            <person name="Hara R."/>
            <person name="Takeuchi K."/>
            <person name="Arita M."/>
            <person name="Imose N."/>
            <person name="Musashino K."/>
            <person name="Yuuki H."/>
            <person name="Oshima A."/>
            <person name="Sasaki N."/>
            <person name="Aotsuka S."/>
            <person name="Yoshikawa Y."/>
            <person name="Matsunawa H."/>
            <person name="Ichihara T."/>
            <person name="Shiohata N."/>
            <person name="Sano S."/>
            <person name="Moriya S."/>
            <person name="Momiyama H."/>
            <person name="Satoh N."/>
            <person name="Takami S."/>
            <person name="Terashima Y."/>
            <person name="Suzuki O."/>
            <person name="Nakagawa S."/>
            <person name="Senoh A."/>
            <person name="Mizoguchi H."/>
            <person name="Goto Y."/>
            <person name="Shimizu F."/>
            <person name="Wakebe H."/>
            <person name="Hishigaki H."/>
            <person name="Watanabe T."/>
            <person name="Sugiyama A."/>
            <person name="Takemoto M."/>
            <person name="Kawakami B."/>
            <person name="Yamazaki M."/>
            <person name="Watanabe K."/>
            <person name="Kumagai A."/>
            <person name="Itakura S."/>
            <person name="Fukuzumi Y."/>
            <person name="Fujimori Y."/>
            <person name="Komiyama M."/>
            <person name="Tashiro H."/>
            <person name="Tanigami A."/>
            <person name="Fujiwara T."/>
            <person name="Ono T."/>
            <person name="Yamada K."/>
            <person name="Fujii Y."/>
            <person name="Ozaki K."/>
            <person name="Hirao M."/>
            <person name="Ohmori Y."/>
            <person name="Kawabata A."/>
            <person name="Hikiji T."/>
            <person name="Kobatake N."/>
            <person name="Inagaki H."/>
            <person name="Ikema Y."/>
            <person name="Okamoto S."/>
            <person name="Okitani R."/>
            <person name="Kawakami T."/>
            <person name="Noguchi S."/>
            <person name="Itoh T."/>
            <person name="Shigeta K."/>
            <person name="Senba T."/>
            <person name="Matsumura K."/>
            <person name="Nakajima Y."/>
            <person name="Mizuno T."/>
            <person name="Morinaga M."/>
            <person name="Sasaki M."/>
            <person name="Togashi T."/>
            <person name="Oyama M."/>
            <person name="Hata H."/>
            <person name="Watanabe M."/>
            <person name="Komatsu T."/>
            <person name="Mizushima-Sugano J."/>
            <person name="Satoh T."/>
            <person name="Shirai Y."/>
            <person name="Takahashi Y."/>
            <person name="Nakagawa K."/>
            <person name="Okumura K."/>
            <person name="Nagase T."/>
            <person name="Nomura N."/>
            <person name="Kikuchi H."/>
            <person name="Masuho Y."/>
            <person name="Yamashita R."/>
            <person name="Nakai K."/>
            <person name="Yada T."/>
            <person name="Nakamura Y."/>
            <person name="Ohara O."/>
            <person name="Isogai T."/>
            <person name="Sugano S."/>
        </authorList>
    </citation>
    <scope>NUCLEOTIDE SEQUENCE [LARGE SCALE MRNA]</scope>
    <source>
        <tissue>Testis</tissue>
    </source>
</reference>
<reference key="2">
    <citation type="journal article" date="2006" name="Nature">
        <title>DNA sequence and analysis of human chromosome 8.</title>
        <authorList>
            <person name="Nusbaum C."/>
            <person name="Mikkelsen T.S."/>
            <person name="Zody M.C."/>
            <person name="Asakawa S."/>
            <person name="Taudien S."/>
            <person name="Garber M."/>
            <person name="Kodira C.D."/>
            <person name="Schueler M.G."/>
            <person name="Shimizu A."/>
            <person name="Whittaker C.A."/>
            <person name="Chang J.L."/>
            <person name="Cuomo C.A."/>
            <person name="Dewar K."/>
            <person name="FitzGerald M.G."/>
            <person name="Yang X."/>
            <person name="Allen N.R."/>
            <person name="Anderson S."/>
            <person name="Asakawa T."/>
            <person name="Blechschmidt K."/>
            <person name="Bloom T."/>
            <person name="Borowsky M.L."/>
            <person name="Butler J."/>
            <person name="Cook A."/>
            <person name="Corum B."/>
            <person name="DeArellano K."/>
            <person name="DeCaprio D."/>
            <person name="Dooley K.T."/>
            <person name="Dorris L. III"/>
            <person name="Engels R."/>
            <person name="Gloeckner G."/>
            <person name="Hafez N."/>
            <person name="Hagopian D.S."/>
            <person name="Hall J.L."/>
            <person name="Ishikawa S.K."/>
            <person name="Jaffe D.B."/>
            <person name="Kamat A."/>
            <person name="Kudoh J."/>
            <person name="Lehmann R."/>
            <person name="Lokitsang T."/>
            <person name="Macdonald P."/>
            <person name="Major J.E."/>
            <person name="Matthews C.D."/>
            <person name="Mauceli E."/>
            <person name="Menzel U."/>
            <person name="Mihalev A.H."/>
            <person name="Minoshima S."/>
            <person name="Murayama Y."/>
            <person name="Naylor J.W."/>
            <person name="Nicol R."/>
            <person name="Nguyen C."/>
            <person name="O'Leary S.B."/>
            <person name="O'Neill K."/>
            <person name="Parker S.C.J."/>
            <person name="Polley A."/>
            <person name="Raymond C.K."/>
            <person name="Reichwald K."/>
            <person name="Rodriguez J."/>
            <person name="Sasaki T."/>
            <person name="Schilhabel M."/>
            <person name="Siddiqui R."/>
            <person name="Smith C.L."/>
            <person name="Sneddon T.P."/>
            <person name="Talamas J.A."/>
            <person name="Tenzin P."/>
            <person name="Topham K."/>
            <person name="Venkataraman V."/>
            <person name="Wen G."/>
            <person name="Yamazaki S."/>
            <person name="Young S.K."/>
            <person name="Zeng Q."/>
            <person name="Zimmer A.R."/>
            <person name="Rosenthal A."/>
            <person name="Birren B.W."/>
            <person name="Platzer M."/>
            <person name="Shimizu N."/>
            <person name="Lander E.S."/>
        </authorList>
    </citation>
    <scope>NUCLEOTIDE SEQUENCE [LARGE SCALE GENOMIC DNA]</scope>
</reference>
<feature type="chain" id="PRO_0000399466" description="Zinc finger protein 705B">
    <location>
        <begin position="1"/>
        <end position="300"/>
    </location>
</feature>
<feature type="domain" description="KRAB" evidence="3">
    <location>
        <begin position="7"/>
        <end position="78"/>
    </location>
</feature>
<feature type="zinc finger region" description="C2H2-type 1" evidence="2">
    <location>
        <begin position="172"/>
        <end position="194"/>
    </location>
</feature>
<feature type="zinc finger region" description="C2H2-type 2" evidence="2">
    <location>
        <begin position="200"/>
        <end position="222"/>
    </location>
</feature>
<feature type="zinc finger region" description="C2H2-type 3" evidence="2">
    <location>
        <begin position="228"/>
        <end position="250"/>
    </location>
</feature>
<feature type="zinc finger region" description="C2H2-type 4; degenerate" evidence="2">
    <location>
        <begin position="256"/>
        <end position="278"/>
    </location>
</feature>
<feature type="sequence conflict" description="In Ref. 1; BAF85275." evidence="4" ref="1">
    <original>P</original>
    <variation>H</variation>
    <location>
        <position position="284"/>
    </location>
</feature>
<comment type="function">
    <text evidence="1">May be involved in transcriptional regulation.</text>
</comment>
<comment type="subcellular location">
    <subcellularLocation>
        <location evidence="4">Nucleus</location>
    </subcellularLocation>
</comment>
<comment type="similarity">
    <text evidence="4">Belongs to the krueppel C2H2-type zinc-finger protein family.</text>
</comment>
<proteinExistence type="evidence at transcript level"/>
<name>Z705B_HUMAN</name>
<sequence length="300" mass="34732">MHSLEKVTFEDVAIDFTQEEWDMMDTSKRKLYRDVMLENISHLVSLGYQISKSYIILQLEQGKELWWEGRVFLQDQNPDRESALKKKHMISMHPIIRKDTSTSMTMENSLILEDPFEYNDSGEDCTHSSTITQCLLTHSGKKPCVSKQCGKSLRNLLSPKPRKQIHTKGKSYQCNLCEKAYTNCFYLRRHKMTHTGERPYACHLCGKAFTQCSHLRRHEKTHTGERPYKCHQCGKAFIQSFNLRRHERTHLGQKCYECDKSGKAFSQSSGFRGNKIIHIGEKPPACLLCGKAFSLSSDLR</sequence>